<organism>
    <name type="scientific">Fagopyrum esculentum subsp. ancestrale</name>
    <name type="common">Wild buckwheat</name>
    <dbReference type="NCBI Taxonomy" id="180217"/>
    <lineage>
        <taxon>Eukaryota</taxon>
        <taxon>Viridiplantae</taxon>
        <taxon>Streptophyta</taxon>
        <taxon>Embryophyta</taxon>
        <taxon>Tracheophyta</taxon>
        <taxon>Spermatophyta</taxon>
        <taxon>Magnoliopsida</taxon>
        <taxon>eudicotyledons</taxon>
        <taxon>Gunneridae</taxon>
        <taxon>Pentapetalae</taxon>
        <taxon>Caryophyllales</taxon>
        <taxon>Polygonaceae</taxon>
        <taxon>Polygonoideae</taxon>
        <taxon>Fagopyreae</taxon>
        <taxon>Fagopyrum</taxon>
    </lineage>
</organism>
<feature type="chain" id="PRO_0000355387" description="Cytochrome b6-f complex subunit 5">
    <location>
        <begin position="1"/>
        <end position="37"/>
    </location>
</feature>
<feature type="transmembrane region" description="Helical" evidence="1">
    <location>
        <begin position="5"/>
        <end position="25"/>
    </location>
</feature>
<name>PETG_FAGEA</name>
<sequence length="37" mass="4136">MIEVLLFGIVLGLIPITLAGLFVTAYLQYRRGDQLDL</sequence>
<proteinExistence type="inferred from homology"/>
<reference key="1">
    <citation type="journal article" date="2008" name="BMC Plant Biol.">
        <title>Comparative chloroplast genomics and phylogenetics of Fagopyrum esculentum ssp. ancestrale - a wild ancestor of cultivated buckwheat.</title>
        <authorList>
            <person name="Logacheva M.D."/>
            <person name="Samigullin T.H."/>
            <person name="Dhingra A."/>
            <person name="Penin A.A."/>
        </authorList>
    </citation>
    <scope>NUCLEOTIDE SEQUENCE [LARGE SCALE GENOMIC DNA]</scope>
</reference>
<dbReference type="EMBL" id="EU254477">
    <property type="protein sequence ID" value="ABY79751.1"/>
    <property type="molecule type" value="Genomic_DNA"/>
</dbReference>
<dbReference type="RefSeq" id="YP_001936536.1">
    <property type="nucleotide sequence ID" value="NC_010776.1"/>
</dbReference>
<dbReference type="SMR" id="B2XWM4"/>
<dbReference type="GeneID" id="6336044"/>
<dbReference type="GO" id="GO:0009535">
    <property type="term" value="C:chloroplast thylakoid membrane"/>
    <property type="evidence" value="ECO:0007669"/>
    <property type="project" value="UniProtKB-SubCell"/>
</dbReference>
<dbReference type="GO" id="GO:0009512">
    <property type="term" value="C:cytochrome b6f complex"/>
    <property type="evidence" value="ECO:0007669"/>
    <property type="project" value="InterPro"/>
</dbReference>
<dbReference type="GO" id="GO:0045158">
    <property type="term" value="F:electron transporter, transferring electrons within cytochrome b6/f complex of photosystem II activity"/>
    <property type="evidence" value="ECO:0007669"/>
    <property type="project" value="UniProtKB-UniRule"/>
</dbReference>
<dbReference type="GO" id="GO:0017004">
    <property type="term" value="P:cytochrome complex assembly"/>
    <property type="evidence" value="ECO:0007669"/>
    <property type="project" value="UniProtKB-UniRule"/>
</dbReference>
<dbReference type="GO" id="GO:0015979">
    <property type="term" value="P:photosynthesis"/>
    <property type="evidence" value="ECO:0007669"/>
    <property type="project" value="UniProtKB-KW"/>
</dbReference>
<dbReference type="HAMAP" id="MF_00432">
    <property type="entry name" value="Cytb6_f_PetG"/>
    <property type="match status" value="1"/>
</dbReference>
<dbReference type="InterPro" id="IPR003683">
    <property type="entry name" value="Cyt_6/f_cplx_su5"/>
</dbReference>
<dbReference type="InterPro" id="IPR036099">
    <property type="entry name" value="Cyt_6/f_cplx_su5_sf"/>
</dbReference>
<dbReference type="NCBIfam" id="NF001907">
    <property type="entry name" value="PRK00665.1"/>
    <property type="match status" value="1"/>
</dbReference>
<dbReference type="Pfam" id="PF02529">
    <property type="entry name" value="PetG"/>
    <property type="match status" value="1"/>
</dbReference>
<dbReference type="PIRSF" id="PIRSF000034">
    <property type="entry name" value="Cyt_b6-f_V"/>
    <property type="match status" value="1"/>
</dbReference>
<dbReference type="SUPFAM" id="SSF103446">
    <property type="entry name" value="PetG subunit of the cytochrome b6f complex"/>
    <property type="match status" value="1"/>
</dbReference>
<gene>
    <name evidence="1" type="primary">petG</name>
</gene>
<protein>
    <recommendedName>
        <fullName evidence="1">Cytochrome b6-f complex subunit 5</fullName>
    </recommendedName>
    <alternativeName>
        <fullName evidence="1">Cytochrome b6-f complex subunit PetG</fullName>
    </alternativeName>
    <alternativeName>
        <fullName evidence="1">Cytochrome b6-f complex subunit V</fullName>
    </alternativeName>
</protein>
<comment type="function">
    <text evidence="1">Component of the cytochrome b6-f complex, which mediates electron transfer between photosystem II (PSII) and photosystem I (PSI), cyclic electron flow around PSI, and state transitions. PetG is required for either the stability or assembly of the cytochrome b6-f complex.</text>
</comment>
<comment type="subunit">
    <text evidence="1">The 4 large subunits of the cytochrome b6-f complex are cytochrome b6, subunit IV (17 kDa polypeptide, PetD), cytochrome f and the Rieske protein, while the 4 small subunits are PetG, PetL, PetM and PetN. The complex functions as a dimer.</text>
</comment>
<comment type="subcellular location">
    <subcellularLocation>
        <location evidence="1">Plastid</location>
        <location evidence="1">Chloroplast thylakoid membrane</location>
        <topology evidence="1">Single-pass membrane protein</topology>
    </subcellularLocation>
</comment>
<comment type="similarity">
    <text evidence="1">Belongs to the PetG family.</text>
</comment>
<evidence type="ECO:0000255" key="1">
    <source>
        <dbReference type="HAMAP-Rule" id="MF_00432"/>
    </source>
</evidence>
<geneLocation type="chloroplast"/>
<accession>B2XWM4</accession>
<keyword id="KW-0150">Chloroplast</keyword>
<keyword id="KW-0249">Electron transport</keyword>
<keyword id="KW-0472">Membrane</keyword>
<keyword id="KW-0602">Photosynthesis</keyword>
<keyword id="KW-0934">Plastid</keyword>
<keyword id="KW-0793">Thylakoid</keyword>
<keyword id="KW-0812">Transmembrane</keyword>
<keyword id="KW-1133">Transmembrane helix</keyword>
<keyword id="KW-0813">Transport</keyword>